<name>COAE_CAMJE</name>
<keyword id="KW-0002">3D-structure</keyword>
<keyword id="KW-0067">ATP-binding</keyword>
<keyword id="KW-0173">Coenzyme A biosynthesis</keyword>
<keyword id="KW-0963">Cytoplasm</keyword>
<keyword id="KW-0418">Kinase</keyword>
<keyword id="KW-0547">Nucleotide-binding</keyword>
<keyword id="KW-1185">Reference proteome</keyword>
<keyword id="KW-0808">Transferase</keyword>
<protein>
    <recommendedName>
        <fullName evidence="1">Dephospho-CoA kinase</fullName>
        <ecNumber evidence="1">2.7.1.24</ecNumber>
    </recommendedName>
    <alternativeName>
        <fullName evidence="1">Dephosphocoenzyme A kinase</fullName>
    </alternativeName>
</protein>
<organism>
    <name type="scientific">Campylobacter jejuni subsp. jejuni serotype O:2 (strain ATCC 700819 / NCTC 11168)</name>
    <dbReference type="NCBI Taxonomy" id="192222"/>
    <lineage>
        <taxon>Bacteria</taxon>
        <taxon>Pseudomonadati</taxon>
        <taxon>Campylobacterota</taxon>
        <taxon>Epsilonproteobacteria</taxon>
        <taxon>Campylobacterales</taxon>
        <taxon>Campylobacteraceae</taxon>
        <taxon>Campylobacter</taxon>
    </lineage>
</organism>
<sequence length="201" mass="23048">MKNAFFVTASIACGKSTFIEIANSLGFKSISADKIAHKILDENALELEKIFSPFSLKNLLKKEKKIDRKILGEIVFNNKEAKKILENFTHPKIRAKILEQMQILDKENKAFFVEIPLFFESGAYENLGKVIVIYTPKELSLKRIMQRDKLSLEAAKARLDSQIDIEEKLKKADFIIKNTNSYADFRQECVKVIQEISKGNM</sequence>
<comment type="function">
    <text evidence="1">Catalyzes the phosphorylation of the 3'-hydroxyl group of dephosphocoenzyme A to form coenzyme A.</text>
</comment>
<comment type="catalytic activity">
    <reaction evidence="1">
        <text>3'-dephospho-CoA + ATP = ADP + CoA + H(+)</text>
        <dbReference type="Rhea" id="RHEA:18245"/>
        <dbReference type="ChEBI" id="CHEBI:15378"/>
        <dbReference type="ChEBI" id="CHEBI:30616"/>
        <dbReference type="ChEBI" id="CHEBI:57287"/>
        <dbReference type="ChEBI" id="CHEBI:57328"/>
        <dbReference type="ChEBI" id="CHEBI:456216"/>
        <dbReference type="EC" id="2.7.1.24"/>
    </reaction>
</comment>
<comment type="pathway">
    <text evidence="1">Cofactor biosynthesis; coenzyme A biosynthesis; CoA from (R)-pantothenate: step 5/5.</text>
</comment>
<comment type="subcellular location">
    <subcellularLocation>
        <location evidence="1">Cytoplasm</location>
    </subcellularLocation>
</comment>
<comment type="similarity">
    <text evidence="1 2">Belongs to the CoaE family.</text>
</comment>
<accession>Q9PMD9</accession>
<accession>Q0P895</accession>
<reference key="1">
    <citation type="journal article" date="2000" name="Nature">
        <title>The genome sequence of the food-borne pathogen Campylobacter jejuni reveals hypervariable sequences.</title>
        <authorList>
            <person name="Parkhill J."/>
            <person name="Wren B.W."/>
            <person name="Mungall K.L."/>
            <person name="Ketley J.M."/>
            <person name="Churcher C.M."/>
            <person name="Basham D."/>
            <person name="Chillingworth T."/>
            <person name="Davies R.M."/>
            <person name="Feltwell T."/>
            <person name="Holroyd S."/>
            <person name="Jagels K."/>
            <person name="Karlyshev A.V."/>
            <person name="Moule S."/>
            <person name="Pallen M.J."/>
            <person name="Penn C.W."/>
            <person name="Quail M.A."/>
            <person name="Rajandream M.A."/>
            <person name="Rutherford K.M."/>
            <person name="van Vliet A.H.M."/>
            <person name="Whitehead S."/>
            <person name="Barrell B.G."/>
        </authorList>
    </citation>
    <scope>NUCLEOTIDE SEQUENCE [LARGE SCALE GENOMIC DNA]</scope>
    <source>
        <strain>ATCC 700819 / NCTC 11168</strain>
    </source>
</reference>
<gene>
    <name evidence="1" type="primary">coaE</name>
    <name type="ordered locus">Cj1530</name>
</gene>
<dbReference type="EC" id="2.7.1.24" evidence="1"/>
<dbReference type="EMBL" id="AL111168">
    <property type="protein sequence ID" value="CAL35630.1"/>
    <property type="molecule type" value="Genomic_DNA"/>
</dbReference>
<dbReference type="PIR" id="H81299">
    <property type="entry name" value="H81299"/>
</dbReference>
<dbReference type="RefSeq" id="WP_002851523.1">
    <property type="nucleotide sequence ID" value="NZ_SZUC01000003.1"/>
</dbReference>
<dbReference type="RefSeq" id="YP_002344902.1">
    <property type="nucleotide sequence ID" value="NC_002163.1"/>
</dbReference>
<dbReference type="PDB" id="4ZO4">
    <property type="method" value="X-ray"/>
    <property type="resolution" value="2.57 A"/>
    <property type="chains" value="A/B/C/D=2-201"/>
</dbReference>
<dbReference type="PDBsum" id="4ZO4"/>
<dbReference type="SMR" id="Q9PMD9"/>
<dbReference type="IntAct" id="Q9PMD9">
    <property type="interactions" value="2"/>
</dbReference>
<dbReference type="STRING" id="192222.Cj1530"/>
<dbReference type="PaxDb" id="192222-Cj1530"/>
<dbReference type="EnsemblBacteria" id="CAL35630">
    <property type="protein sequence ID" value="CAL35630"/>
    <property type="gene ID" value="Cj1530"/>
</dbReference>
<dbReference type="GeneID" id="905813"/>
<dbReference type="KEGG" id="cje:Cj1530"/>
<dbReference type="PATRIC" id="fig|192222.6.peg.1507"/>
<dbReference type="eggNOG" id="COG0237">
    <property type="taxonomic scope" value="Bacteria"/>
</dbReference>
<dbReference type="HOGENOM" id="CLU_057180_0_0_7"/>
<dbReference type="OrthoDB" id="9812943at2"/>
<dbReference type="UniPathway" id="UPA00241">
    <property type="reaction ID" value="UER00356"/>
</dbReference>
<dbReference type="EvolutionaryTrace" id="Q9PMD9"/>
<dbReference type="Proteomes" id="UP000000799">
    <property type="component" value="Chromosome"/>
</dbReference>
<dbReference type="GO" id="GO:0005737">
    <property type="term" value="C:cytoplasm"/>
    <property type="evidence" value="ECO:0007669"/>
    <property type="project" value="UniProtKB-SubCell"/>
</dbReference>
<dbReference type="GO" id="GO:0005524">
    <property type="term" value="F:ATP binding"/>
    <property type="evidence" value="ECO:0007669"/>
    <property type="project" value="UniProtKB-UniRule"/>
</dbReference>
<dbReference type="GO" id="GO:0004140">
    <property type="term" value="F:dephospho-CoA kinase activity"/>
    <property type="evidence" value="ECO:0007669"/>
    <property type="project" value="UniProtKB-UniRule"/>
</dbReference>
<dbReference type="GO" id="GO:0015937">
    <property type="term" value="P:coenzyme A biosynthetic process"/>
    <property type="evidence" value="ECO:0007669"/>
    <property type="project" value="UniProtKB-UniRule"/>
</dbReference>
<dbReference type="CDD" id="cd02022">
    <property type="entry name" value="DPCK"/>
    <property type="match status" value="1"/>
</dbReference>
<dbReference type="Gene3D" id="3.40.50.300">
    <property type="entry name" value="P-loop containing nucleotide triphosphate hydrolases"/>
    <property type="match status" value="1"/>
</dbReference>
<dbReference type="HAMAP" id="MF_00376">
    <property type="entry name" value="Dephospho_CoA_kinase"/>
    <property type="match status" value="1"/>
</dbReference>
<dbReference type="InterPro" id="IPR001977">
    <property type="entry name" value="Depp_CoAkinase"/>
</dbReference>
<dbReference type="InterPro" id="IPR027417">
    <property type="entry name" value="P-loop_NTPase"/>
</dbReference>
<dbReference type="NCBIfam" id="TIGR00152">
    <property type="entry name" value="dephospho-CoA kinase"/>
    <property type="match status" value="1"/>
</dbReference>
<dbReference type="PANTHER" id="PTHR10695:SF46">
    <property type="entry name" value="BIFUNCTIONAL COENZYME A SYNTHASE-RELATED"/>
    <property type="match status" value="1"/>
</dbReference>
<dbReference type="PANTHER" id="PTHR10695">
    <property type="entry name" value="DEPHOSPHO-COA KINASE-RELATED"/>
    <property type="match status" value="1"/>
</dbReference>
<dbReference type="Pfam" id="PF01121">
    <property type="entry name" value="CoaE"/>
    <property type="match status" value="1"/>
</dbReference>
<dbReference type="SUPFAM" id="SSF52540">
    <property type="entry name" value="P-loop containing nucleoside triphosphate hydrolases"/>
    <property type="match status" value="1"/>
</dbReference>
<dbReference type="PROSITE" id="PS51219">
    <property type="entry name" value="DPCK"/>
    <property type="match status" value="1"/>
</dbReference>
<proteinExistence type="evidence at protein level"/>
<feature type="chain" id="PRO_0000172922" description="Dephospho-CoA kinase">
    <location>
        <begin position="1"/>
        <end position="201"/>
    </location>
</feature>
<feature type="domain" description="DPCK" evidence="1">
    <location>
        <begin position="4"/>
        <end position="201"/>
    </location>
</feature>
<feature type="binding site" evidence="1">
    <location>
        <begin position="12"/>
        <end position="17"/>
    </location>
    <ligand>
        <name>ATP</name>
        <dbReference type="ChEBI" id="CHEBI:30616"/>
    </ligand>
</feature>
<feature type="strand" evidence="3">
    <location>
        <begin position="2"/>
        <end position="11"/>
    </location>
</feature>
<feature type="helix" evidence="3">
    <location>
        <begin position="12"/>
        <end position="24"/>
    </location>
</feature>
<feature type="strand" evidence="3">
    <location>
        <begin position="28"/>
        <end position="31"/>
    </location>
</feature>
<feature type="helix" evidence="3">
    <location>
        <begin position="32"/>
        <end position="42"/>
    </location>
</feature>
<feature type="helix" evidence="3">
    <location>
        <begin position="44"/>
        <end position="51"/>
    </location>
</feature>
<feature type="helix" evidence="3">
    <location>
        <begin position="52"/>
        <end position="54"/>
    </location>
</feature>
<feature type="strand" evidence="3">
    <location>
        <begin position="62"/>
        <end position="64"/>
    </location>
</feature>
<feature type="helix" evidence="3">
    <location>
        <begin position="68"/>
        <end position="77"/>
    </location>
</feature>
<feature type="helix" evidence="3">
    <location>
        <begin position="79"/>
        <end position="106"/>
    </location>
</feature>
<feature type="strand" evidence="3">
    <location>
        <begin position="111"/>
        <end position="114"/>
    </location>
</feature>
<feature type="helix" evidence="3">
    <location>
        <begin position="124"/>
        <end position="126"/>
    </location>
</feature>
<feature type="strand" evidence="3">
    <location>
        <begin position="128"/>
        <end position="133"/>
    </location>
</feature>
<feature type="helix" evidence="3">
    <location>
        <begin position="141"/>
        <end position="148"/>
    </location>
</feature>
<feature type="helix" evidence="3">
    <location>
        <begin position="152"/>
        <end position="169"/>
    </location>
</feature>
<feature type="strand" evidence="3">
    <location>
        <begin position="173"/>
        <end position="176"/>
    </location>
</feature>
<feature type="helix" evidence="3">
    <location>
        <begin position="182"/>
        <end position="197"/>
    </location>
</feature>
<evidence type="ECO:0000255" key="1">
    <source>
        <dbReference type="HAMAP-Rule" id="MF_00376"/>
    </source>
</evidence>
<evidence type="ECO:0000305" key="2"/>
<evidence type="ECO:0007829" key="3">
    <source>
        <dbReference type="PDB" id="4ZO4"/>
    </source>
</evidence>